<organism>
    <name type="scientific">Borreliella burgdorferi (strain ATCC 35210 / DSM 4680 / CIP 102532 / B31)</name>
    <name type="common">Borrelia burgdorferi</name>
    <dbReference type="NCBI Taxonomy" id="224326"/>
    <lineage>
        <taxon>Bacteria</taxon>
        <taxon>Pseudomonadati</taxon>
        <taxon>Spirochaetota</taxon>
        <taxon>Spirochaetia</taxon>
        <taxon>Spirochaetales</taxon>
        <taxon>Borreliaceae</taxon>
        <taxon>Borreliella</taxon>
    </lineage>
</organism>
<evidence type="ECO:0000255" key="1">
    <source>
        <dbReference type="HAMAP-Rule" id="MF_01820"/>
    </source>
</evidence>
<evidence type="ECO:0000255" key="2">
    <source>
        <dbReference type="PROSITE-ProRule" id="PRU01058"/>
    </source>
</evidence>
<accession>O51126</accession>
<keyword id="KW-0963">Cytoplasm</keyword>
<keyword id="KW-0342">GTP-binding</keyword>
<keyword id="KW-0378">Hydrolase</keyword>
<keyword id="KW-0479">Metal-binding</keyword>
<keyword id="KW-0547">Nucleotide-binding</keyword>
<keyword id="KW-1185">Reference proteome</keyword>
<keyword id="KW-0690">Ribosome biogenesis</keyword>
<keyword id="KW-0694">RNA-binding</keyword>
<keyword id="KW-0699">rRNA-binding</keyword>
<keyword id="KW-0862">Zinc</keyword>
<gene>
    <name evidence="1" type="primary">rsgA</name>
    <name type="ordered locus">BB_0099</name>
</gene>
<dbReference type="EC" id="3.6.1.-" evidence="1"/>
<dbReference type="EMBL" id="AE000783">
    <property type="protein sequence ID" value="AAC66480.1"/>
    <property type="molecule type" value="Genomic_DNA"/>
</dbReference>
<dbReference type="PIR" id="C70112">
    <property type="entry name" value="C70112"/>
</dbReference>
<dbReference type="RefSeq" id="NP_212233.1">
    <property type="nucleotide sequence ID" value="NC_001318.1"/>
</dbReference>
<dbReference type="RefSeq" id="WP_002556701.1">
    <property type="nucleotide sequence ID" value="NC_001318.1"/>
</dbReference>
<dbReference type="SMR" id="O51126"/>
<dbReference type="STRING" id="224326.BB_0099"/>
<dbReference type="PaxDb" id="224326-BB_0099"/>
<dbReference type="EnsemblBacteria" id="AAC66480">
    <property type="protein sequence ID" value="AAC66480"/>
    <property type="gene ID" value="BB_0099"/>
</dbReference>
<dbReference type="GeneID" id="56568119"/>
<dbReference type="KEGG" id="bbu:BB_0099"/>
<dbReference type="PATRIC" id="fig|224326.49.peg.497"/>
<dbReference type="HOGENOM" id="CLU_033617_2_1_12"/>
<dbReference type="OrthoDB" id="9809485at2"/>
<dbReference type="Proteomes" id="UP000001807">
    <property type="component" value="Chromosome"/>
</dbReference>
<dbReference type="GO" id="GO:0005737">
    <property type="term" value="C:cytoplasm"/>
    <property type="evidence" value="ECO:0007669"/>
    <property type="project" value="UniProtKB-SubCell"/>
</dbReference>
<dbReference type="GO" id="GO:0005525">
    <property type="term" value="F:GTP binding"/>
    <property type="evidence" value="ECO:0007669"/>
    <property type="project" value="UniProtKB-UniRule"/>
</dbReference>
<dbReference type="GO" id="GO:0003924">
    <property type="term" value="F:GTPase activity"/>
    <property type="evidence" value="ECO:0007669"/>
    <property type="project" value="UniProtKB-UniRule"/>
</dbReference>
<dbReference type="GO" id="GO:0046872">
    <property type="term" value="F:metal ion binding"/>
    <property type="evidence" value="ECO:0007669"/>
    <property type="project" value="UniProtKB-KW"/>
</dbReference>
<dbReference type="GO" id="GO:0019843">
    <property type="term" value="F:rRNA binding"/>
    <property type="evidence" value="ECO:0007669"/>
    <property type="project" value="UniProtKB-KW"/>
</dbReference>
<dbReference type="GO" id="GO:0042274">
    <property type="term" value="P:ribosomal small subunit biogenesis"/>
    <property type="evidence" value="ECO:0007669"/>
    <property type="project" value="UniProtKB-UniRule"/>
</dbReference>
<dbReference type="CDD" id="cd01854">
    <property type="entry name" value="YjeQ_EngC"/>
    <property type="match status" value="1"/>
</dbReference>
<dbReference type="Gene3D" id="3.40.50.300">
    <property type="entry name" value="P-loop containing nucleotide triphosphate hydrolases"/>
    <property type="match status" value="1"/>
</dbReference>
<dbReference type="Gene3D" id="1.10.40.50">
    <property type="entry name" value="Probable gtpase engc, domain 3"/>
    <property type="match status" value="1"/>
</dbReference>
<dbReference type="HAMAP" id="MF_01820">
    <property type="entry name" value="GTPase_RsgA"/>
    <property type="match status" value="1"/>
</dbReference>
<dbReference type="InterPro" id="IPR030378">
    <property type="entry name" value="G_CP_dom"/>
</dbReference>
<dbReference type="InterPro" id="IPR027417">
    <property type="entry name" value="P-loop_NTPase"/>
</dbReference>
<dbReference type="InterPro" id="IPR004881">
    <property type="entry name" value="Ribosome_biogen_GTPase_RsgA"/>
</dbReference>
<dbReference type="InterPro" id="IPR010914">
    <property type="entry name" value="RsgA_GTPase_dom"/>
</dbReference>
<dbReference type="NCBIfam" id="TIGR00157">
    <property type="entry name" value="ribosome small subunit-dependent GTPase A"/>
    <property type="match status" value="1"/>
</dbReference>
<dbReference type="PANTHER" id="PTHR32120">
    <property type="entry name" value="SMALL RIBOSOMAL SUBUNIT BIOGENESIS GTPASE RSGA"/>
    <property type="match status" value="1"/>
</dbReference>
<dbReference type="PANTHER" id="PTHR32120:SF11">
    <property type="entry name" value="SMALL RIBOSOMAL SUBUNIT BIOGENESIS GTPASE RSGA 1, MITOCHONDRIAL-RELATED"/>
    <property type="match status" value="1"/>
</dbReference>
<dbReference type="Pfam" id="PF03193">
    <property type="entry name" value="RsgA_GTPase"/>
    <property type="match status" value="1"/>
</dbReference>
<dbReference type="SUPFAM" id="SSF52540">
    <property type="entry name" value="P-loop containing nucleoside triphosphate hydrolases"/>
    <property type="match status" value="1"/>
</dbReference>
<dbReference type="PROSITE" id="PS50936">
    <property type="entry name" value="ENGC_GTPASE"/>
    <property type="match status" value="1"/>
</dbReference>
<dbReference type="PROSITE" id="PS51721">
    <property type="entry name" value="G_CP"/>
    <property type="match status" value="1"/>
</dbReference>
<name>RSGA_BORBU</name>
<comment type="function">
    <text evidence="1">One of several proteins that assist in the late maturation steps of the functional core of the 30S ribosomal subunit. Helps release RbfA from mature subunits. May play a role in the assembly of ribosomal proteins into the subunit. Circularly permuted GTPase that catalyzes slow GTP hydrolysis, GTPase activity is stimulated by the 30S ribosomal subunit.</text>
</comment>
<comment type="cofactor">
    <cofactor evidence="1">
        <name>Zn(2+)</name>
        <dbReference type="ChEBI" id="CHEBI:29105"/>
    </cofactor>
    <text evidence="1">Binds 1 zinc ion per subunit.</text>
</comment>
<comment type="subunit">
    <text evidence="1">Monomer. Associates with 30S ribosomal subunit, binds 16S rRNA.</text>
</comment>
<comment type="subcellular location">
    <subcellularLocation>
        <location evidence="1">Cytoplasm</location>
    </subcellularLocation>
</comment>
<comment type="similarity">
    <text evidence="1">Belongs to the TRAFAC class YlqF/YawG GTPase family. RsgA subfamily.</text>
</comment>
<proteinExistence type="inferred from homology"/>
<feature type="chain" id="PRO_0000171467" description="Small ribosomal subunit biogenesis GTPase RsgA">
    <location>
        <begin position="1"/>
        <end position="307"/>
    </location>
</feature>
<feature type="domain" description="CP-type G" evidence="2">
    <location>
        <begin position="80"/>
        <end position="237"/>
    </location>
</feature>
<feature type="binding site" evidence="1">
    <location>
        <begin position="129"/>
        <end position="132"/>
    </location>
    <ligand>
        <name>GTP</name>
        <dbReference type="ChEBI" id="CHEBI:37565"/>
    </ligand>
</feature>
<feature type="binding site" evidence="1">
    <location>
        <begin position="180"/>
        <end position="188"/>
    </location>
    <ligand>
        <name>GTP</name>
        <dbReference type="ChEBI" id="CHEBI:37565"/>
    </ligand>
</feature>
<feature type="binding site" evidence="1">
    <location>
        <position position="261"/>
    </location>
    <ligand>
        <name>Zn(2+)</name>
        <dbReference type="ChEBI" id="CHEBI:29105"/>
    </ligand>
</feature>
<feature type="binding site" evidence="1">
    <location>
        <position position="266"/>
    </location>
    <ligand>
        <name>Zn(2+)</name>
        <dbReference type="ChEBI" id="CHEBI:29105"/>
    </ligand>
</feature>
<feature type="binding site" evidence="1">
    <location>
        <position position="268"/>
    </location>
    <ligand>
        <name>Zn(2+)</name>
        <dbReference type="ChEBI" id="CHEBI:29105"/>
    </ligand>
</feature>
<feature type="binding site" evidence="1">
    <location>
        <position position="274"/>
    </location>
    <ligand>
        <name>Zn(2+)</name>
        <dbReference type="ChEBI" id="CHEBI:29105"/>
    </ligand>
</feature>
<protein>
    <recommendedName>
        <fullName evidence="1">Small ribosomal subunit biogenesis GTPase RsgA</fullName>
        <ecNumber evidence="1">3.6.1.-</ecNumber>
    </recommendedName>
</protein>
<reference key="1">
    <citation type="journal article" date="1997" name="Nature">
        <title>Genomic sequence of a Lyme disease spirochaete, Borrelia burgdorferi.</title>
        <authorList>
            <person name="Fraser C.M."/>
            <person name="Casjens S."/>
            <person name="Huang W.M."/>
            <person name="Sutton G.G."/>
            <person name="Clayton R.A."/>
            <person name="Lathigra R."/>
            <person name="White O."/>
            <person name="Ketchum K.A."/>
            <person name="Dodson R.J."/>
            <person name="Hickey E.K."/>
            <person name="Gwinn M.L."/>
            <person name="Dougherty B.A."/>
            <person name="Tomb J.-F."/>
            <person name="Fleischmann R.D."/>
            <person name="Richardson D.L."/>
            <person name="Peterson J.D."/>
            <person name="Kerlavage A.R."/>
            <person name="Quackenbush J."/>
            <person name="Salzberg S.L."/>
            <person name="Hanson M."/>
            <person name="van Vugt R."/>
            <person name="Palmer N."/>
            <person name="Adams M.D."/>
            <person name="Gocayne J.D."/>
            <person name="Weidman J.F."/>
            <person name="Utterback T.R."/>
            <person name="Watthey L."/>
            <person name="McDonald L.A."/>
            <person name="Artiach P."/>
            <person name="Bowman C."/>
            <person name="Garland S.A."/>
            <person name="Fujii C."/>
            <person name="Cotton M.D."/>
            <person name="Horst K."/>
            <person name="Roberts K.M."/>
            <person name="Hatch B."/>
            <person name="Smith H.O."/>
            <person name="Venter J.C."/>
        </authorList>
    </citation>
    <scope>NUCLEOTIDE SEQUENCE [LARGE SCALE GENOMIC DNA]</scope>
    <source>
        <strain>ATCC 35210 / DSM 4680 / CIP 102532 / B31</strain>
    </source>
</reference>
<sequence length="307" mass="35257">MNYLEFEVIWGVNNIYSILELNSKLIYEGIFKGKVLETGCKEYSPLVPGDIVLGYIYSSRKVYIDKRLSRKNILWRYNKKADLRQTIVSNIDNVLIVSSANFPEMKNFFIDRVLIVAEEQNIVPIIVINKIDKGISQKAQEFSEIYENLGYKVLKTSVKTYEGIKEVKEVLKNSRTSFIGQSGVGKSSLINLIDSRASQSVNEISHKYSRGKHTTVYSISFHSDSGIIVDTPGIKEFGIETLPFENLKYYFKEFENFASFCKYKSCLHVSEPYCSVTSSLDNGISKLRYESYLKILSELKNYKNYAR</sequence>